<organism>
    <name type="scientific">Saccharopolyspora erythraea (strain ATCC 11635 / DSM 40517 / JCM 4748 / NBRC 13426 / NCIMB 8594 / NRRL 2338)</name>
    <dbReference type="NCBI Taxonomy" id="405948"/>
    <lineage>
        <taxon>Bacteria</taxon>
        <taxon>Bacillati</taxon>
        <taxon>Actinomycetota</taxon>
        <taxon>Actinomycetes</taxon>
        <taxon>Pseudonocardiales</taxon>
        <taxon>Pseudonocardiaceae</taxon>
        <taxon>Saccharopolyspora</taxon>
    </lineage>
</organism>
<sequence length="93" mass="10673">MPRSLKKGPFVDDHLLKKVDALNESGKKTVIKTWSRRSTIIPDMLGHTFAVHDGRKHIPVFVNESMVGHKLGEFAPTRTFKGHVKDDRKSRRR</sequence>
<keyword id="KW-1185">Reference proteome</keyword>
<keyword id="KW-0687">Ribonucleoprotein</keyword>
<keyword id="KW-0689">Ribosomal protein</keyword>
<keyword id="KW-0694">RNA-binding</keyword>
<keyword id="KW-0699">rRNA-binding</keyword>
<dbReference type="EMBL" id="AM420293">
    <property type="protein sequence ID" value="CAM05996.1"/>
    <property type="molecule type" value="Genomic_DNA"/>
</dbReference>
<dbReference type="RefSeq" id="WP_009948631.1">
    <property type="nucleotide sequence ID" value="NC_009142.1"/>
</dbReference>
<dbReference type="SMR" id="A4FPM1"/>
<dbReference type="STRING" id="405948.SACE_6832"/>
<dbReference type="KEGG" id="sen:SACE_6832"/>
<dbReference type="eggNOG" id="COG0185">
    <property type="taxonomic scope" value="Bacteria"/>
</dbReference>
<dbReference type="HOGENOM" id="CLU_144911_0_1_11"/>
<dbReference type="OrthoDB" id="9797833at2"/>
<dbReference type="Proteomes" id="UP000006728">
    <property type="component" value="Chromosome"/>
</dbReference>
<dbReference type="GO" id="GO:0005737">
    <property type="term" value="C:cytoplasm"/>
    <property type="evidence" value="ECO:0007669"/>
    <property type="project" value="UniProtKB-ARBA"/>
</dbReference>
<dbReference type="GO" id="GO:0015935">
    <property type="term" value="C:small ribosomal subunit"/>
    <property type="evidence" value="ECO:0007669"/>
    <property type="project" value="InterPro"/>
</dbReference>
<dbReference type="GO" id="GO:0019843">
    <property type="term" value="F:rRNA binding"/>
    <property type="evidence" value="ECO:0007669"/>
    <property type="project" value="UniProtKB-UniRule"/>
</dbReference>
<dbReference type="GO" id="GO:0003735">
    <property type="term" value="F:structural constituent of ribosome"/>
    <property type="evidence" value="ECO:0007669"/>
    <property type="project" value="InterPro"/>
</dbReference>
<dbReference type="GO" id="GO:0000028">
    <property type="term" value="P:ribosomal small subunit assembly"/>
    <property type="evidence" value="ECO:0007669"/>
    <property type="project" value="TreeGrafter"/>
</dbReference>
<dbReference type="GO" id="GO:0006412">
    <property type="term" value="P:translation"/>
    <property type="evidence" value="ECO:0007669"/>
    <property type="project" value="UniProtKB-UniRule"/>
</dbReference>
<dbReference type="FunFam" id="3.30.860.10:FF:000001">
    <property type="entry name" value="30S ribosomal protein S19"/>
    <property type="match status" value="1"/>
</dbReference>
<dbReference type="Gene3D" id="3.30.860.10">
    <property type="entry name" value="30s Ribosomal Protein S19, Chain A"/>
    <property type="match status" value="1"/>
</dbReference>
<dbReference type="HAMAP" id="MF_00531">
    <property type="entry name" value="Ribosomal_uS19"/>
    <property type="match status" value="1"/>
</dbReference>
<dbReference type="InterPro" id="IPR002222">
    <property type="entry name" value="Ribosomal_uS19"/>
</dbReference>
<dbReference type="InterPro" id="IPR005732">
    <property type="entry name" value="Ribosomal_uS19_bac-type"/>
</dbReference>
<dbReference type="InterPro" id="IPR020934">
    <property type="entry name" value="Ribosomal_uS19_CS"/>
</dbReference>
<dbReference type="InterPro" id="IPR023575">
    <property type="entry name" value="Ribosomal_uS19_SF"/>
</dbReference>
<dbReference type="NCBIfam" id="TIGR01050">
    <property type="entry name" value="rpsS_bact"/>
    <property type="match status" value="1"/>
</dbReference>
<dbReference type="PANTHER" id="PTHR11880">
    <property type="entry name" value="RIBOSOMAL PROTEIN S19P FAMILY MEMBER"/>
    <property type="match status" value="1"/>
</dbReference>
<dbReference type="PANTHER" id="PTHR11880:SF8">
    <property type="entry name" value="SMALL RIBOSOMAL SUBUNIT PROTEIN US19M"/>
    <property type="match status" value="1"/>
</dbReference>
<dbReference type="Pfam" id="PF00203">
    <property type="entry name" value="Ribosomal_S19"/>
    <property type="match status" value="1"/>
</dbReference>
<dbReference type="PIRSF" id="PIRSF002144">
    <property type="entry name" value="Ribosomal_S19"/>
    <property type="match status" value="1"/>
</dbReference>
<dbReference type="PRINTS" id="PR00975">
    <property type="entry name" value="RIBOSOMALS19"/>
</dbReference>
<dbReference type="SUPFAM" id="SSF54570">
    <property type="entry name" value="Ribosomal protein S19"/>
    <property type="match status" value="1"/>
</dbReference>
<dbReference type="PROSITE" id="PS00323">
    <property type="entry name" value="RIBOSOMAL_S19"/>
    <property type="match status" value="1"/>
</dbReference>
<evidence type="ECO:0000255" key="1">
    <source>
        <dbReference type="HAMAP-Rule" id="MF_00531"/>
    </source>
</evidence>
<evidence type="ECO:0000305" key="2"/>
<reference key="1">
    <citation type="journal article" date="2007" name="Nat. Biotechnol.">
        <title>Complete genome sequence of the erythromycin-producing bacterium Saccharopolyspora erythraea NRRL23338.</title>
        <authorList>
            <person name="Oliynyk M."/>
            <person name="Samborskyy M."/>
            <person name="Lester J.B."/>
            <person name="Mironenko T."/>
            <person name="Scott N."/>
            <person name="Dickens S."/>
            <person name="Haydock S.F."/>
            <person name="Leadlay P.F."/>
        </authorList>
    </citation>
    <scope>NUCLEOTIDE SEQUENCE [LARGE SCALE GENOMIC DNA]</scope>
    <source>
        <strain>ATCC 11635 / DSM 40517 / JCM 4748 / NBRC 13426 / NCIMB 8594 / NRRL 2338</strain>
    </source>
</reference>
<protein>
    <recommendedName>
        <fullName evidence="1">Small ribosomal subunit protein uS19</fullName>
    </recommendedName>
    <alternativeName>
        <fullName evidence="2">30S ribosomal protein S19</fullName>
    </alternativeName>
</protein>
<proteinExistence type="inferred from homology"/>
<name>RS19_SACEN</name>
<accession>A4FPM1</accession>
<comment type="function">
    <text evidence="1">Protein S19 forms a complex with S13 that binds strongly to the 16S ribosomal RNA.</text>
</comment>
<comment type="similarity">
    <text evidence="1">Belongs to the universal ribosomal protein uS19 family.</text>
</comment>
<gene>
    <name evidence="1" type="primary">rpsS</name>
    <name type="ordered locus">SACE_6832</name>
</gene>
<feature type="chain" id="PRO_1000051119" description="Small ribosomal subunit protein uS19">
    <location>
        <begin position="1"/>
        <end position="93"/>
    </location>
</feature>